<dbReference type="EC" id="4.3.2.10" evidence="1"/>
<dbReference type="EMBL" id="CP000548">
    <property type="protein sequence ID" value="ABO04084.1"/>
    <property type="status" value="ALT_INIT"/>
    <property type="molecule type" value="Genomic_DNA"/>
</dbReference>
<dbReference type="RefSeq" id="WP_011204150.1">
    <property type="nucleotide sequence ID" value="NZ_CP007802.1"/>
</dbReference>
<dbReference type="SMR" id="A3MPU4"/>
<dbReference type="GeneID" id="92980390"/>
<dbReference type="KEGG" id="bmaz:BM44_573"/>
<dbReference type="KEGG" id="bmn:BMA10247_2759"/>
<dbReference type="PATRIC" id="fig|320389.8.peg.627"/>
<dbReference type="UniPathway" id="UPA00031">
    <property type="reaction ID" value="UER00010"/>
</dbReference>
<dbReference type="GO" id="GO:0005737">
    <property type="term" value="C:cytoplasm"/>
    <property type="evidence" value="ECO:0007669"/>
    <property type="project" value="UniProtKB-SubCell"/>
</dbReference>
<dbReference type="GO" id="GO:0000107">
    <property type="term" value="F:imidazoleglycerol-phosphate synthase activity"/>
    <property type="evidence" value="ECO:0007669"/>
    <property type="project" value="UniProtKB-UniRule"/>
</dbReference>
<dbReference type="GO" id="GO:0016829">
    <property type="term" value="F:lyase activity"/>
    <property type="evidence" value="ECO:0007669"/>
    <property type="project" value="UniProtKB-KW"/>
</dbReference>
<dbReference type="GO" id="GO:0000105">
    <property type="term" value="P:L-histidine biosynthetic process"/>
    <property type="evidence" value="ECO:0007669"/>
    <property type="project" value="UniProtKB-UniRule"/>
</dbReference>
<dbReference type="CDD" id="cd04731">
    <property type="entry name" value="HisF"/>
    <property type="match status" value="1"/>
</dbReference>
<dbReference type="FunFam" id="3.20.20.70:FF:000006">
    <property type="entry name" value="Imidazole glycerol phosphate synthase subunit HisF"/>
    <property type="match status" value="1"/>
</dbReference>
<dbReference type="Gene3D" id="3.20.20.70">
    <property type="entry name" value="Aldolase class I"/>
    <property type="match status" value="1"/>
</dbReference>
<dbReference type="HAMAP" id="MF_01013">
    <property type="entry name" value="HisF"/>
    <property type="match status" value="1"/>
</dbReference>
<dbReference type="InterPro" id="IPR013785">
    <property type="entry name" value="Aldolase_TIM"/>
</dbReference>
<dbReference type="InterPro" id="IPR006062">
    <property type="entry name" value="His_biosynth"/>
</dbReference>
<dbReference type="InterPro" id="IPR004651">
    <property type="entry name" value="HisF"/>
</dbReference>
<dbReference type="InterPro" id="IPR050064">
    <property type="entry name" value="IGPS_HisA/HisF"/>
</dbReference>
<dbReference type="InterPro" id="IPR011060">
    <property type="entry name" value="RibuloseP-bd_barrel"/>
</dbReference>
<dbReference type="NCBIfam" id="TIGR00735">
    <property type="entry name" value="hisF"/>
    <property type="match status" value="1"/>
</dbReference>
<dbReference type="PANTHER" id="PTHR21235:SF2">
    <property type="entry name" value="IMIDAZOLE GLYCEROL PHOSPHATE SYNTHASE HISHF"/>
    <property type="match status" value="1"/>
</dbReference>
<dbReference type="PANTHER" id="PTHR21235">
    <property type="entry name" value="IMIDAZOLE GLYCEROL PHOSPHATE SYNTHASE SUBUNIT HISF/H IGP SYNTHASE SUBUNIT HISF/H"/>
    <property type="match status" value="1"/>
</dbReference>
<dbReference type="Pfam" id="PF00977">
    <property type="entry name" value="His_biosynth"/>
    <property type="match status" value="1"/>
</dbReference>
<dbReference type="SUPFAM" id="SSF51366">
    <property type="entry name" value="Ribulose-phoshate binding barrel"/>
    <property type="match status" value="1"/>
</dbReference>
<gene>
    <name evidence="1" type="primary">hisF</name>
    <name type="ordered locus">BMA10247_2759</name>
</gene>
<comment type="function">
    <text evidence="1">IGPS catalyzes the conversion of PRFAR and glutamine to IGP, AICAR and glutamate. The HisF subunit catalyzes the cyclization activity that produces IGP and AICAR from PRFAR using the ammonia provided by the HisH subunit.</text>
</comment>
<comment type="catalytic activity">
    <reaction evidence="1">
        <text>5-[(5-phospho-1-deoxy-D-ribulos-1-ylimino)methylamino]-1-(5-phospho-beta-D-ribosyl)imidazole-4-carboxamide + L-glutamine = D-erythro-1-(imidazol-4-yl)glycerol 3-phosphate + 5-amino-1-(5-phospho-beta-D-ribosyl)imidazole-4-carboxamide + L-glutamate + H(+)</text>
        <dbReference type="Rhea" id="RHEA:24793"/>
        <dbReference type="ChEBI" id="CHEBI:15378"/>
        <dbReference type="ChEBI" id="CHEBI:29985"/>
        <dbReference type="ChEBI" id="CHEBI:58278"/>
        <dbReference type="ChEBI" id="CHEBI:58359"/>
        <dbReference type="ChEBI" id="CHEBI:58475"/>
        <dbReference type="ChEBI" id="CHEBI:58525"/>
        <dbReference type="EC" id="4.3.2.10"/>
    </reaction>
</comment>
<comment type="pathway">
    <text evidence="1">Amino-acid biosynthesis; L-histidine biosynthesis; L-histidine from 5-phospho-alpha-D-ribose 1-diphosphate: step 5/9.</text>
</comment>
<comment type="subunit">
    <text evidence="1">Heterodimer of HisH and HisF.</text>
</comment>
<comment type="subcellular location">
    <subcellularLocation>
        <location evidence="1">Cytoplasm</location>
    </subcellularLocation>
</comment>
<comment type="similarity">
    <text evidence="1">Belongs to the HisA/HisF family.</text>
</comment>
<comment type="sequence caution" evidence="2">
    <conflict type="erroneous initiation">
        <sequence resource="EMBL-CDS" id="ABO04084"/>
    </conflict>
</comment>
<feature type="chain" id="PRO_0000319450" description="Imidazole glycerol phosphate synthase subunit HisF">
    <location>
        <begin position="1"/>
        <end position="257"/>
    </location>
</feature>
<feature type="active site" evidence="1">
    <location>
        <position position="12"/>
    </location>
</feature>
<feature type="active site" evidence="1">
    <location>
        <position position="131"/>
    </location>
</feature>
<keyword id="KW-0028">Amino-acid biosynthesis</keyword>
<keyword id="KW-0963">Cytoplasm</keyword>
<keyword id="KW-0368">Histidine biosynthesis</keyword>
<keyword id="KW-0456">Lyase</keyword>
<evidence type="ECO:0000255" key="1">
    <source>
        <dbReference type="HAMAP-Rule" id="MF_01013"/>
    </source>
</evidence>
<evidence type="ECO:0000305" key="2"/>
<name>HIS6_BURM7</name>
<sequence length="257" mass="27013">MALAKRIIPCFDVTAGRVVKGVNFVELRDAGDPVEIARRYDAQGADELTFLDITATSDGRDLILPIIEAVASQVFIPLTVGGGVRAVEDVRRLLNAGADKVSMNSSAVANPPLVRDAADKYGSQCIVVAIDAKRVSADGEPPRWEVFTHGGRKGTGLDAVEWARKMAELGAGEILLTSMDRDGTKAGFDLALTRAVSDAVPVPVIASGGVGSLEHLAAGITEGHADAVLAASIFHYGEHTVGEAKRFMAERGIAVRL</sequence>
<organism>
    <name type="scientific">Burkholderia mallei (strain NCTC 10247)</name>
    <dbReference type="NCBI Taxonomy" id="320389"/>
    <lineage>
        <taxon>Bacteria</taxon>
        <taxon>Pseudomonadati</taxon>
        <taxon>Pseudomonadota</taxon>
        <taxon>Betaproteobacteria</taxon>
        <taxon>Burkholderiales</taxon>
        <taxon>Burkholderiaceae</taxon>
        <taxon>Burkholderia</taxon>
        <taxon>pseudomallei group</taxon>
    </lineage>
</organism>
<reference key="1">
    <citation type="journal article" date="2010" name="Genome Biol. Evol.">
        <title>Continuing evolution of Burkholderia mallei through genome reduction and large-scale rearrangements.</title>
        <authorList>
            <person name="Losada L."/>
            <person name="Ronning C.M."/>
            <person name="DeShazer D."/>
            <person name="Woods D."/>
            <person name="Fedorova N."/>
            <person name="Kim H.S."/>
            <person name="Shabalina S.A."/>
            <person name="Pearson T.R."/>
            <person name="Brinkac L."/>
            <person name="Tan P."/>
            <person name="Nandi T."/>
            <person name="Crabtree J."/>
            <person name="Badger J."/>
            <person name="Beckstrom-Sternberg S."/>
            <person name="Saqib M."/>
            <person name="Schutzer S.E."/>
            <person name="Keim P."/>
            <person name="Nierman W.C."/>
        </authorList>
    </citation>
    <scope>NUCLEOTIDE SEQUENCE [LARGE SCALE GENOMIC DNA]</scope>
    <source>
        <strain>NCTC 10247</strain>
    </source>
</reference>
<proteinExistence type="inferred from homology"/>
<protein>
    <recommendedName>
        <fullName evidence="1">Imidazole glycerol phosphate synthase subunit HisF</fullName>
        <ecNumber evidence="1">4.3.2.10</ecNumber>
    </recommendedName>
    <alternativeName>
        <fullName evidence="1">IGP synthase cyclase subunit</fullName>
    </alternativeName>
    <alternativeName>
        <fullName evidence="1">IGP synthase subunit HisF</fullName>
    </alternativeName>
    <alternativeName>
        <fullName evidence="1">ImGP synthase subunit HisF</fullName>
        <shortName evidence="1">IGPS subunit HisF</shortName>
    </alternativeName>
</protein>
<accession>A3MPU4</accession>